<dbReference type="EMBL" id="M96262">
    <property type="protein sequence ID" value="AAA46276.1"/>
    <property type="molecule type" value="Genomic_RNA"/>
</dbReference>
<dbReference type="EMBL" id="L04493">
    <property type="protein sequence ID" value="AAA47103.1"/>
    <property type="molecule type" value="Genomic_RNA"/>
</dbReference>
<dbReference type="PIR" id="C45392">
    <property type="entry name" value="C45392"/>
</dbReference>
<dbReference type="PIR" id="D36861">
    <property type="entry name" value="D36861"/>
</dbReference>
<dbReference type="GlyCosmos" id="Q04567">
    <property type="glycosylation" value="7 sites, No reported glycans"/>
</dbReference>
<dbReference type="Proteomes" id="UP000006687">
    <property type="component" value="Segment"/>
</dbReference>
<dbReference type="GO" id="GO:0005576">
    <property type="term" value="C:extracellular region"/>
    <property type="evidence" value="ECO:0007669"/>
    <property type="project" value="UniProtKB-SubCell"/>
</dbReference>
<dbReference type="GO" id="GO:0044167">
    <property type="term" value="C:host cell endoplasmic reticulum membrane"/>
    <property type="evidence" value="ECO:0007669"/>
    <property type="project" value="UniProtKB-SubCell"/>
</dbReference>
<dbReference type="GO" id="GO:0044178">
    <property type="term" value="C:host cell Golgi membrane"/>
    <property type="evidence" value="ECO:0007669"/>
    <property type="project" value="UniProtKB-SubCell"/>
</dbReference>
<dbReference type="GO" id="GO:0016020">
    <property type="term" value="C:membrane"/>
    <property type="evidence" value="ECO:0007669"/>
    <property type="project" value="UniProtKB-KW"/>
</dbReference>
<dbReference type="GO" id="GO:0019031">
    <property type="term" value="C:viral envelope"/>
    <property type="evidence" value="ECO:0007669"/>
    <property type="project" value="UniProtKB-KW"/>
</dbReference>
<dbReference type="GO" id="GO:0055036">
    <property type="term" value="C:virion membrane"/>
    <property type="evidence" value="ECO:0007669"/>
    <property type="project" value="UniProtKB-SubCell"/>
</dbReference>
<dbReference type="InterPro" id="IPR002556">
    <property type="entry name" value="Arteri_GP3"/>
</dbReference>
<dbReference type="Pfam" id="PF01606">
    <property type="entry name" value="Arteri_env"/>
    <property type="match status" value="1"/>
</dbReference>
<keyword id="KW-0325">Glycoprotein</keyword>
<keyword id="KW-1038">Host endoplasmic reticulum</keyword>
<keyword id="KW-1040">Host Golgi apparatus</keyword>
<keyword id="KW-1043">Host membrane</keyword>
<keyword id="KW-0472">Membrane</keyword>
<keyword id="KW-1185">Reference proteome</keyword>
<keyword id="KW-0964">Secreted</keyword>
<keyword id="KW-0812">Transmembrane</keyword>
<keyword id="KW-1133">Transmembrane helix</keyword>
<keyword id="KW-0261">Viral envelope protein</keyword>
<keyword id="KW-0946">Virion</keyword>
<sequence>MAHQCARFHFFLCGFICYLVHSALASNSSSTLCFWFPLAHGNTSFELTINYTICMPCSTSQAARQRLEPGRNMWCKIGHDRCEERDHDELLMSIPSGYDNLKLEGYYAWLAFLSFSYAAQFHPELFGIGNVSRVFVDKRHQFICAEHDGHNSTVSTGHNISALYAAYYHHQIDGGNWFHLEWLRPLFSSWLVLNISWFLRRSPVSPVSRRIYQILRPTRPRLPVSWSFRTSIVSDLTGSQQRKRKFPSESRPNVVKPSVLPSTSR</sequence>
<accession>Q04567</accession>
<gene>
    <name type="primary">GP3</name>
    <name type="ORF">3</name>
</gene>
<comment type="function">
    <text>Minor envelope protein.</text>
</comment>
<comment type="subunit">
    <text evidence="1 5">Heterotrimer of GP2a, GP3, and GP4 (By similarity). The GP2a-GP3-GP4 complex associates with the E protein (Probable).</text>
</comment>
<comment type="subcellular location">
    <subcellularLocation>
        <location evidence="4">Virion membrane</location>
        <topology evidence="4">Single-pass type I membrane protein</topology>
    </subcellularLocation>
    <subcellularLocation>
        <location evidence="4">Host endoplasmic reticulum membrane</location>
        <topology evidence="4">Single-pass type I membrane protein</topology>
    </subcellularLocation>
    <subcellularLocation>
        <location evidence="4">Host Golgi apparatus membrane</location>
        <topology evidence="4">Single-pass type I membrane protein</topology>
    </subcellularLocation>
    <subcellularLocation>
        <location evidence="4">Secreted</location>
    </subcellularLocation>
    <text evidence="1">Only a small fraction of GP3 synthesized in infected cells ends up in virions. The transmembrane region probably functions as an uncleaved signal (By similarity).</text>
</comment>
<comment type="similarity">
    <text evidence="5">Belongs to the arteriviridae GP3 protein family.</text>
</comment>
<proteinExistence type="evidence at protein level"/>
<organism>
    <name type="scientific">Porcine reproductive and respiratory syndrome virus (strain Lelystad)</name>
    <name type="common">PRRSV</name>
    <dbReference type="NCBI Taxonomy" id="11049"/>
    <lineage>
        <taxon>Viruses</taxon>
        <taxon>Riboviria</taxon>
        <taxon>Orthornavirae</taxon>
        <taxon>Pisuviricota</taxon>
        <taxon>Pisoniviricetes</taxon>
        <taxon>Nidovirales</taxon>
        <taxon>Arnidovirineae</taxon>
        <taxon>Arteriviridae</taxon>
        <taxon>Variarterivirinae</taxon>
        <taxon>Betaarterivirus</taxon>
        <taxon>Eurpobartevirus</taxon>
        <taxon>Betaarterivirus suid 1</taxon>
    </lineage>
</organism>
<name>GP3_PRRSL</name>
<evidence type="ECO:0000250" key="1"/>
<evidence type="ECO:0000255" key="2"/>
<evidence type="ECO:0000256" key="3">
    <source>
        <dbReference type="SAM" id="MobiDB-lite"/>
    </source>
</evidence>
<evidence type="ECO:0000269" key="4">
    <source>
    </source>
</evidence>
<evidence type="ECO:0000305" key="5"/>
<protein>
    <recommendedName>
        <fullName>Glycoprotein 3</fullName>
        <shortName>Protein GP3</shortName>
    </recommendedName>
</protein>
<reference key="1">
    <citation type="journal article" date="1993" name="Virology">
        <title>Lelystad virus, the causative agent of porcine epidemic abortion and respiratory syndrome (PEARS), is related to LDV and EAV.</title>
        <authorList>
            <person name="Meulenberg J.J.M."/>
            <person name="Hulst M.M."/>
            <person name="de Meijer E.J."/>
            <person name="Moonen P.L.J.M."/>
            <person name="den Besten A."/>
            <person name="de Kluyver E.P."/>
            <person name="Wensvoort G."/>
            <person name="Moormann R.J.M."/>
        </authorList>
    </citation>
    <scope>NUCLEOTIDE SEQUENCE [GENOMIC RNA]</scope>
</reference>
<reference key="2">
    <citation type="journal article" date="1993" name="Virology">
        <title>Molecular characterization of porcine reproductive and respiratory syndrome virus, a member of the arterivirus group.</title>
        <authorList>
            <person name="Conzelmann K.K."/>
            <person name="Visser N."/>
            <person name="van Woensel P."/>
            <person name="Thiel H.J."/>
        </authorList>
    </citation>
    <scope>NUCLEOTIDE SEQUENCE [GENOMIC RNA]</scope>
    <source>
        <strain>Isolate Boxmeer 10</strain>
    </source>
</reference>
<reference key="3">
    <citation type="journal article" date="2005" name="J. Virol.">
        <title>Envelope protein requirements for the assembly of infectious virions of porcine reproductive and respiratory syndrome virus.</title>
        <authorList>
            <person name="Wissink E.H."/>
            <person name="Kroese M.V."/>
            <person name="van Wijk H.A."/>
            <person name="Rijsewijk F.A."/>
            <person name="Meulenberg J.J."/>
            <person name="Rottier P.J."/>
        </authorList>
    </citation>
    <scope>SUBCELLULAR LOCATION</scope>
    <scope>SUBUNIT</scope>
</reference>
<feature type="chain" id="PRO_0000080879" description="Glycoprotein 3">
    <location>
        <begin position="1"/>
        <end position="265"/>
    </location>
</feature>
<feature type="transmembrane region" description="Helical" evidence="2">
    <location>
        <begin position="8"/>
        <end position="25"/>
    </location>
</feature>
<feature type="region of interest" description="Disordered" evidence="3">
    <location>
        <begin position="239"/>
        <end position="265"/>
    </location>
</feature>
<feature type="glycosylation site" description="N-linked (GlcNAc...) asparagine; by host" evidence="2">
    <location>
        <position position="27"/>
    </location>
</feature>
<feature type="glycosylation site" description="N-linked (GlcNAc...) asparagine; by host" evidence="2">
    <location>
        <position position="42"/>
    </location>
</feature>
<feature type="glycosylation site" description="N-linked (GlcNAc...) asparagine; by host" evidence="2">
    <location>
        <position position="50"/>
    </location>
</feature>
<feature type="glycosylation site" description="N-linked (GlcNAc...) asparagine; by host" evidence="2">
    <location>
        <position position="130"/>
    </location>
</feature>
<feature type="glycosylation site" description="N-linked (GlcNAc...) asparagine; by host" evidence="2">
    <location>
        <position position="151"/>
    </location>
</feature>
<feature type="glycosylation site" description="N-linked (GlcNAc...) asparagine; by host" evidence="2">
    <location>
        <position position="159"/>
    </location>
</feature>
<feature type="glycosylation site" description="N-linked (GlcNAc...) asparagine; by host" evidence="2">
    <location>
        <position position="194"/>
    </location>
</feature>
<feature type="sequence conflict" description="In Ref. 2; AAA47103." evidence="5" ref="2">
    <original>HQC</original>
    <variation>RQR</variation>
    <location>
        <begin position="3"/>
        <end position="5"/>
    </location>
</feature>
<feature type="sequence conflict" description="In Ref. 2; AAA47103." evidence="5" ref="2">
    <original>H</original>
    <variation>P</variation>
    <location>
        <position position="150"/>
    </location>
</feature>
<organismHost>
    <name type="scientific">Sus scrofa</name>
    <name type="common">Pig</name>
    <dbReference type="NCBI Taxonomy" id="9823"/>
</organismHost>